<feature type="chain" id="PRO_0000128032" description="Uncharacterized protein AF_1581">
    <location>
        <begin position="1"/>
        <end position="106"/>
    </location>
</feature>
<name>Y1581_ARCFU</name>
<organism>
    <name type="scientific">Archaeoglobus fulgidus (strain ATCC 49558 / DSM 4304 / JCM 9628 / NBRC 100126 / VC-16)</name>
    <dbReference type="NCBI Taxonomy" id="224325"/>
    <lineage>
        <taxon>Archaea</taxon>
        <taxon>Methanobacteriati</taxon>
        <taxon>Methanobacteriota</taxon>
        <taxon>Archaeoglobi</taxon>
        <taxon>Archaeoglobales</taxon>
        <taxon>Archaeoglobaceae</taxon>
        <taxon>Archaeoglobus</taxon>
    </lineage>
</organism>
<protein>
    <recommendedName>
        <fullName>Uncharacterized protein AF_1581</fullName>
    </recommendedName>
</protein>
<gene>
    <name type="ordered locus">AF_1581</name>
</gene>
<dbReference type="EMBL" id="AE000782">
    <property type="protein sequence ID" value="AAB89668.1"/>
    <property type="molecule type" value="Genomic_DNA"/>
</dbReference>
<dbReference type="PIR" id="D69447">
    <property type="entry name" value="D69447"/>
</dbReference>
<dbReference type="SMR" id="O28691"/>
<dbReference type="STRING" id="224325.AF_1581"/>
<dbReference type="PaxDb" id="224325-AF_1581"/>
<dbReference type="DNASU" id="1484809"/>
<dbReference type="EnsemblBacteria" id="AAB89668">
    <property type="protein sequence ID" value="AAB89668"/>
    <property type="gene ID" value="AF_1581"/>
</dbReference>
<dbReference type="KEGG" id="afu:AF_1581"/>
<dbReference type="eggNOG" id="arCOG02999">
    <property type="taxonomic scope" value="Archaea"/>
</dbReference>
<dbReference type="HOGENOM" id="CLU_2216909_0_0_2"/>
<dbReference type="Proteomes" id="UP000002199">
    <property type="component" value="Chromosome"/>
</dbReference>
<dbReference type="CDD" id="cd02209">
    <property type="entry name" value="cupin_XRE_C"/>
    <property type="match status" value="1"/>
</dbReference>
<dbReference type="Gene3D" id="2.60.120.10">
    <property type="entry name" value="Jelly Rolls"/>
    <property type="match status" value="1"/>
</dbReference>
<dbReference type="InterPro" id="IPR014710">
    <property type="entry name" value="RmlC-like_jellyroll"/>
</dbReference>
<dbReference type="InterPro" id="IPR011051">
    <property type="entry name" value="RmlC_Cupin_sf"/>
</dbReference>
<dbReference type="SUPFAM" id="SSF51182">
    <property type="entry name" value="RmlC-like cupins"/>
    <property type="match status" value="1"/>
</dbReference>
<sequence>MEGKGFRHTVKAKTVVLYGKLECNVRGLVYELGWRDSMLHSSAIPHKVRNVGKEKAIYLTVCSPPGGVMGSEPLSYFQLQESGCGLVERFKGFKPSDVCDLETLDR</sequence>
<keyword id="KW-1185">Reference proteome</keyword>
<accession>O28691</accession>
<proteinExistence type="predicted"/>
<reference key="1">
    <citation type="journal article" date="1997" name="Nature">
        <title>The complete genome sequence of the hyperthermophilic, sulphate-reducing archaeon Archaeoglobus fulgidus.</title>
        <authorList>
            <person name="Klenk H.-P."/>
            <person name="Clayton R.A."/>
            <person name="Tomb J.-F."/>
            <person name="White O."/>
            <person name="Nelson K.E."/>
            <person name="Ketchum K.A."/>
            <person name="Dodson R.J."/>
            <person name="Gwinn M.L."/>
            <person name="Hickey E.K."/>
            <person name="Peterson J.D."/>
            <person name="Richardson D.L."/>
            <person name="Kerlavage A.R."/>
            <person name="Graham D.E."/>
            <person name="Kyrpides N.C."/>
            <person name="Fleischmann R.D."/>
            <person name="Quackenbush J."/>
            <person name="Lee N.H."/>
            <person name="Sutton G.G."/>
            <person name="Gill S.R."/>
            <person name="Kirkness E.F."/>
            <person name="Dougherty B.A."/>
            <person name="McKenney K."/>
            <person name="Adams M.D."/>
            <person name="Loftus B.J."/>
            <person name="Peterson S.N."/>
            <person name="Reich C.I."/>
            <person name="McNeil L.K."/>
            <person name="Badger J.H."/>
            <person name="Glodek A."/>
            <person name="Zhou L."/>
            <person name="Overbeek R."/>
            <person name="Gocayne J.D."/>
            <person name="Weidman J.F."/>
            <person name="McDonald L.A."/>
            <person name="Utterback T.R."/>
            <person name="Cotton M.D."/>
            <person name="Spriggs T."/>
            <person name="Artiach P."/>
            <person name="Kaine B.P."/>
            <person name="Sykes S.M."/>
            <person name="Sadow P.W."/>
            <person name="D'Andrea K.P."/>
            <person name="Bowman C."/>
            <person name="Fujii C."/>
            <person name="Garland S.A."/>
            <person name="Mason T.M."/>
            <person name="Olsen G.J."/>
            <person name="Fraser C.M."/>
            <person name="Smith H.O."/>
            <person name="Woese C.R."/>
            <person name="Venter J.C."/>
        </authorList>
    </citation>
    <scope>NUCLEOTIDE SEQUENCE [LARGE SCALE GENOMIC DNA]</scope>
    <source>
        <strain>ATCC 49558 / DSM 4304 / JCM 9628 / NBRC 100126 / VC-16</strain>
    </source>
</reference>